<keyword id="KW-0418">Kinase</keyword>
<keyword id="KW-0547">Nucleotide-binding</keyword>
<keyword id="KW-0723">Serine/threonine-protein kinase</keyword>
<keyword id="KW-0808">Transferase</keyword>
<protein>
    <recommendedName>
        <fullName evidence="1">Putative phosphoenolpyruvate synthase regulatory protein</fullName>
        <shortName evidence="1">PEP synthase regulatory protein</shortName>
        <shortName evidence="1">PSRP</shortName>
        <ecNumber evidence="1">2.7.11.33</ecNumber>
        <ecNumber evidence="1">2.7.4.28</ecNumber>
    </recommendedName>
    <alternativeName>
        <fullName evidence="1">Pyruvate, water dikinase regulatory protein</fullName>
    </alternativeName>
</protein>
<feature type="chain" id="PRO_0000316644" description="Putative phosphoenolpyruvate synthase regulatory protein">
    <location>
        <begin position="1"/>
        <end position="271"/>
    </location>
</feature>
<feature type="binding site" evidence="1">
    <location>
        <begin position="151"/>
        <end position="158"/>
    </location>
    <ligand>
        <name>ADP</name>
        <dbReference type="ChEBI" id="CHEBI:456216"/>
    </ligand>
</feature>
<dbReference type="EC" id="2.7.11.33" evidence="1"/>
<dbReference type="EC" id="2.7.4.28" evidence="1"/>
<dbReference type="EMBL" id="CP000380">
    <property type="protein sequence ID" value="ABF80939.1"/>
    <property type="molecule type" value="Genomic_DNA"/>
</dbReference>
<dbReference type="SMR" id="Q1BHG6"/>
<dbReference type="HOGENOM" id="CLU_046206_1_0_4"/>
<dbReference type="GO" id="GO:0043531">
    <property type="term" value="F:ADP binding"/>
    <property type="evidence" value="ECO:0007669"/>
    <property type="project" value="UniProtKB-UniRule"/>
</dbReference>
<dbReference type="GO" id="GO:0005524">
    <property type="term" value="F:ATP binding"/>
    <property type="evidence" value="ECO:0007669"/>
    <property type="project" value="InterPro"/>
</dbReference>
<dbReference type="GO" id="GO:0016776">
    <property type="term" value="F:phosphotransferase activity, phosphate group as acceptor"/>
    <property type="evidence" value="ECO:0007669"/>
    <property type="project" value="UniProtKB-UniRule"/>
</dbReference>
<dbReference type="GO" id="GO:0004674">
    <property type="term" value="F:protein serine/threonine kinase activity"/>
    <property type="evidence" value="ECO:0007669"/>
    <property type="project" value="UniProtKB-UniRule"/>
</dbReference>
<dbReference type="HAMAP" id="MF_01062">
    <property type="entry name" value="PSRP"/>
    <property type="match status" value="1"/>
</dbReference>
<dbReference type="InterPro" id="IPR005177">
    <property type="entry name" value="Kinase-pyrophosphorylase"/>
</dbReference>
<dbReference type="InterPro" id="IPR026530">
    <property type="entry name" value="PSRP"/>
</dbReference>
<dbReference type="NCBIfam" id="NF003742">
    <property type="entry name" value="PRK05339.1"/>
    <property type="match status" value="1"/>
</dbReference>
<dbReference type="PANTHER" id="PTHR31756">
    <property type="entry name" value="PYRUVATE, PHOSPHATE DIKINASE REGULATORY PROTEIN 1, CHLOROPLASTIC"/>
    <property type="match status" value="1"/>
</dbReference>
<dbReference type="PANTHER" id="PTHR31756:SF3">
    <property type="entry name" value="PYRUVATE, PHOSPHATE DIKINASE REGULATORY PROTEIN 1, CHLOROPLASTIC"/>
    <property type="match status" value="1"/>
</dbReference>
<dbReference type="Pfam" id="PF03618">
    <property type="entry name" value="Kinase-PPPase"/>
    <property type="match status" value="1"/>
</dbReference>
<gene>
    <name type="ordered locus">Bcen_6074</name>
</gene>
<name>PSRP_BURO1</name>
<reference key="1">
    <citation type="submission" date="2006-05" db="EMBL/GenBank/DDBJ databases">
        <title>Complete sequence of chromosome 3 of Burkholderia cenocepacia AU 1054.</title>
        <authorList>
            <consortium name="US DOE Joint Genome Institute"/>
            <person name="Copeland A."/>
            <person name="Lucas S."/>
            <person name="Lapidus A."/>
            <person name="Barry K."/>
            <person name="Detter J.C."/>
            <person name="Glavina del Rio T."/>
            <person name="Hammon N."/>
            <person name="Israni S."/>
            <person name="Dalin E."/>
            <person name="Tice H."/>
            <person name="Pitluck S."/>
            <person name="Chain P."/>
            <person name="Malfatti S."/>
            <person name="Shin M."/>
            <person name="Vergez L."/>
            <person name="Schmutz J."/>
            <person name="Larimer F."/>
            <person name="Land M."/>
            <person name="Hauser L."/>
            <person name="Kyrpides N."/>
            <person name="Lykidis A."/>
            <person name="LiPuma J.J."/>
            <person name="Konstantinidis K."/>
            <person name="Tiedje J.M."/>
            <person name="Richardson P."/>
        </authorList>
    </citation>
    <scope>NUCLEOTIDE SEQUENCE [LARGE SCALE GENOMIC DNA]</scope>
    <source>
        <strain>AU 1054</strain>
    </source>
</reference>
<sequence>MLPTVFIVSDGTGITAETFAHSILSQFDQKFRLVRVPFVDSLDKAYATVEKINEAAVHDGRRAIVFTTLVDSESNDIVKRSNALVLDMFQRFVEPLEQELELKSSHAMGRGHQNADTEEYKTRIEAINFSLAHDDGQSNRNLSEADVILVGVSRSGKTPTSLYLAMQYGVKAANYPLIPEDFERGKLPSALAPYSEKLFGLSIDPQRLSEIRNERRPGSKYAAPENCRYEINEAEAMMRREGIKWLSSTHKSIEEIATTILQEIRLDRQSY</sequence>
<accession>Q1BHG6</accession>
<evidence type="ECO:0000255" key="1">
    <source>
        <dbReference type="HAMAP-Rule" id="MF_01062"/>
    </source>
</evidence>
<organism>
    <name type="scientific">Burkholderia orbicola (strain AU 1054)</name>
    <dbReference type="NCBI Taxonomy" id="331271"/>
    <lineage>
        <taxon>Bacteria</taxon>
        <taxon>Pseudomonadati</taxon>
        <taxon>Pseudomonadota</taxon>
        <taxon>Betaproteobacteria</taxon>
        <taxon>Burkholderiales</taxon>
        <taxon>Burkholderiaceae</taxon>
        <taxon>Burkholderia</taxon>
        <taxon>Burkholderia cepacia complex</taxon>
        <taxon>Burkholderia orbicola</taxon>
    </lineage>
</organism>
<comment type="function">
    <text evidence="1">Bifunctional serine/threonine kinase and phosphorylase involved in the regulation of the phosphoenolpyruvate synthase (PEPS) by catalyzing its phosphorylation/dephosphorylation.</text>
</comment>
<comment type="catalytic activity">
    <reaction evidence="1">
        <text>[pyruvate, water dikinase] + ADP = [pyruvate, water dikinase]-phosphate + AMP + H(+)</text>
        <dbReference type="Rhea" id="RHEA:46020"/>
        <dbReference type="Rhea" id="RHEA-COMP:11425"/>
        <dbReference type="Rhea" id="RHEA-COMP:11426"/>
        <dbReference type="ChEBI" id="CHEBI:15378"/>
        <dbReference type="ChEBI" id="CHEBI:43176"/>
        <dbReference type="ChEBI" id="CHEBI:68546"/>
        <dbReference type="ChEBI" id="CHEBI:456215"/>
        <dbReference type="ChEBI" id="CHEBI:456216"/>
        <dbReference type="EC" id="2.7.11.33"/>
    </reaction>
</comment>
<comment type="catalytic activity">
    <reaction evidence="1">
        <text>[pyruvate, water dikinase]-phosphate + phosphate + H(+) = [pyruvate, water dikinase] + diphosphate</text>
        <dbReference type="Rhea" id="RHEA:48580"/>
        <dbReference type="Rhea" id="RHEA-COMP:11425"/>
        <dbReference type="Rhea" id="RHEA-COMP:11426"/>
        <dbReference type="ChEBI" id="CHEBI:15378"/>
        <dbReference type="ChEBI" id="CHEBI:33019"/>
        <dbReference type="ChEBI" id="CHEBI:43176"/>
        <dbReference type="ChEBI" id="CHEBI:43474"/>
        <dbReference type="ChEBI" id="CHEBI:68546"/>
        <dbReference type="EC" id="2.7.4.28"/>
    </reaction>
</comment>
<comment type="similarity">
    <text evidence="1">Belongs to the pyruvate, phosphate/water dikinase regulatory protein family. PSRP subfamily.</text>
</comment>
<proteinExistence type="inferred from homology"/>